<evidence type="ECO:0000250" key="1"/>
<evidence type="ECO:0000250" key="2">
    <source>
        <dbReference type="UniProtKB" id="P42338"/>
    </source>
</evidence>
<evidence type="ECO:0000255" key="3">
    <source>
        <dbReference type="PROSITE-ProRule" id="PRU00269"/>
    </source>
</evidence>
<evidence type="ECO:0000255" key="4">
    <source>
        <dbReference type="PROSITE-ProRule" id="PRU00877"/>
    </source>
</evidence>
<evidence type="ECO:0000255" key="5">
    <source>
        <dbReference type="PROSITE-ProRule" id="PRU00878"/>
    </source>
</evidence>
<evidence type="ECO:0000255" key="6">
    <source>
        <dbReference type="PROSITE-ProRule" id="PRU00879"/>
    </source>
</evidence>
<evidence type="ECO:0000255" key="7">
    <source>
        <dbReference type="PROSITE-ProRule" id="PRU00880"/>
    </source>
</evidence>
<evidence type="ECO:0000269" key="8">
    <source>
    </source>
</evidence>
<evidence type="ECO:0000269" key="9">
    <source>
    </source>
</evidence>
<evidence type="ECO:0000269" key="10">
    <source>
    </source>
</evidence>
<evidence type="ECO:0000269" key="11">
    <source>
    </source>
</evidence>
<evidence type="ECO:0000269" key="12">
    <source>
    </source>
</evidence>
<evidence type="ECO:0000269" key="13">
    <source>
    </source>
</evidence>
<evidence type="ECO:0000305" key="14"/>
<evidence type="ECO:0007744" key="15">
    <source>
    </source>
</evidence>
<evidence type="ECO:0007829" key="16">
    <source>
        <dbReference type="PDB" id="2Y3A"/>
    </source>
</evidence>
<evidence type="ECO:0007829" key="17">
    <source>
        <dbReference type="PDB" id="4BFR"/>
    </source>
</evidence>
<protein>
    <recommendedName>
        <fullName>Phosphatidylinositol 4,5-bisphosphate 3-kinase catalytic subunit beta isoform</fullName>
        <shortName>PI3-kinase subunit beta</shortName>
        <shortName>PI3K-beta</shortName>
        <shortName>PI3Kbeta</shortName>
        <shortName>PtdIns-3-kinase subunit beta</shortName>
        <ecNumber evidence="2">2.7.1.153</ecNumber>
    </recommendedName>
    <alternativeName>
        <fullName>Phosphatidylinositol 4,5-bisphosphate 3-kinase 110 kDa catalytic subunit beta</fullName>
        <shortName>PtdIns-3-kinase subunit p110-beta</shortName>
        <shortName>p110beta</shortName>
    </alternativeName>
    <alternativeName>
        <fullName evidence="2">Serine/threonine protein kinase PIK3CB</fullName>
        <ecNumber evidence="2">2.7.11.1</ecNumber>
    </alternativeName>
</protein>
<gene>
    <name type="primary">Pik3cb</name>
</gene>
<organism>
    <name type="scientific">Mus musculus</name>
    <name type="common">Mouse</name>
    <dbReference type="NCBI Taxonomy" id="10090"/>
    <lineage>
        <taxon>Eukaryota</taxon>
        <taxon>Metazoa</taxon>
        <taxon>Chordata</taxon>
        <taxon>Craniata</taxon>
        <taxon>Vertebrata</taxon>
        <taxon>Euteleostomi</taxon>
        <taxon>Mammalia</taxon>
        <taxon>Eutheria</taxon>
        <taxon>Euarchontoglires</taxon>
        <taxon>Glires</taxon>
        <taxon>Rodentia</taxon>
        <taxon>Myomorpha</taxon>
        <taxon>Muroidea</taxon>
        <taxon>Muridae</taxon>
        <taxon>Murinae</taxon>
        <taxon>Mus</taxon>
        <taxon>Mus</taxon>
    </lineage>
</organism>
<sequence>MPPAMADNLDIWAVDSQIASDGAISVDFLLPTGIYIQLEVPREATISYIKQMLWKQVHNYPMFNLLMDIDSYMFACVNQTAVYEELEDETRRLCDVRPFLPVLKLVTRSCDPAEKLDSKIGVLIGKGLHEFDALKDPEVNEFRRKMRKFSEAKIQSLVGLSWIDWLKHTYPPEHEPSVLENLEDKLYGGKLVVAVHFENSQDVFSFQVSPNLNPIKINELAIQKRLTIRGKEDEASPCDYVLQVSGRVEYVFGDHPLIQFQYIRNCVMNRTLPHFILVECCKIKKMYEQEMIAIEAAINRNSSNLPLPLPPKKTRVISHIWDNNNPFQITLVKGNKLNTEETVKVHVRAGLFHGTELLCKTVVSSEISGKNDHIWNEQLEFDINICDLPRMARLCFAVYAVLDKVKTKKSTKTINPSKYQTIRKAGKVHYPVAWVNTMVFDFKGQLRSGDVILHSWSSFPDELEEMLNPMGTVQTNPYAENATALHITFPENKKQPCYYPPFDKIIEKAAELASGDSANVSSRGGKKFLAVLKEILDRDPLSQLCENEMDLIWTLRQDCRENFPQSLPKLLLSIKWNKLEDVAQLQALLQIWPKLPPREALELLDFNYPDQYVREYAVGCLRQMSDEELSQYLLQLVQVLKYEPFLDCALSRFLLERALDNRRIGQFLFWHLRSEVHTPAVSVQFGVILEAYCRGSVGHMKVLSKQVEALNKLKTLNSLIKLNAVKLSRAKGKEAMHTCLKQSAYREALSDLQSPLNPCVILSELYVEKCKYMDSKMKPLWLVYSSRAFGEDSVGVIFKNGDDLRQDMLTLQMLRLMDLLWKEAGLDLRMLPYGCLATGDRSGLIEVVSTSETIADIQLNSSNVAATAAFNKDALLNWLKEYNSGDDLDRAIEEFTLSCAGYCVASYVLGIGDRHSDNIMVKKTGQLFHIDFGHILGNFKSKFGIKRERVPFILTYDFIHVIQQGKTGNTEKFGRFRQCCEDAYLILRRHGNLFITLFALMLTAGLPELTSVKDIQYLKDSLALGKSEEEALKQFKQKFDEALRESWTTKVNWMAHTVRKDYRS</sequence>
<keyword id="KW-0002">3D-structure</keyword>
<keyword id="KW-0067">ATP-binding</keyword>
<keyword id="KW-0072">Autophagy</keyword>
<keyword id="KW-0130">Cell adhesion</keyword>
<keyword id="KW-0963">Cytoplasm</keyword>
<keyword id="KW-0254">Endocytosis</keyword>
<keyword id="KW-0418">Kinase</keyword>
<keyword id="KW-0443">Lipid metabolism</keyword>
<keyword id="KW-0547">Nucleotide-binding</keyword>
<keyword id="KW-0539">Nucleus</keyword>
<keyword id="KW-0597">Phosphoprotein</keyword>
<keyword id="KW-1185">Reference proteome</keyword>
<keyword id="KW-0808">Transferase</keyword>
<feature type="chain" id="PRO_0000088788" description="Phosphatidylinositol 4,5-bisphosphate 3-kinase catalytic subunit beta isoform">
    <location>
        <begin position="1"/>
        <end position="1064"/>
    </location>
</feature>
<feature type="domain" description="PI3K-ABD" evidence="4">
    <location>
        <begin position="20"/>
        <end position="109"/>
    </location>
</feature>
<feature type="domain" description="PI3K-RBD" evidence="6">
    <location>
        <begin position="188"/>
        <end position="279"/>
    </location>
</feature>
<feature type="domain" description="C2 PI3K-type" evidence="7">
    <location>
        <begin position="323"/>
        <end position="490"/>
    </location>
</feature>
<feature type="domain" description="PIK helical" evidence="5">
    <location>
        <begin position="518"/>
        <end position="695"/>
    </location>
</feature>
<feature type="domain" description="PI3K/PI4K catalytic" evidence="3">
    <location>
        <begin position="766"/>
        <end position="1047"/>
    </location>
</feature>
<feature type="region of interest" description="G-loop" evidence="3">
    <location>
        <begin position="772"/>
        <end position="778"/>
    </location>
</feature>
<feature type="region of interest" description="Catalytic loop" evidence="3">
    <location>
        <begin position="910"/>
        <end position="918"/>
    </location>
</feature>
<feature type="region of interest" description="Activation loop" evidence="3">
    <location>
        <begin position="929"/>
        <end position="955"/>
    </location>
</feature>
<feature type="short sequence motif" description="Nuclear localization signal (NLS)" evidence="1">
    <location>
        <begin position="404"/>
        <end position="412"/>
    </location>
</feature>
<feature type="modified residue" description="Phosphoserine" evidence="15">
    <location>
        <position position="318"/>
    </location>
</feature>
<feature type="modified residue" description="Phosphoserine; by autocatalysis" evidence="2">
    <location>
        <position position="1064"/>
    </location>
</feature>
<feature type="sequence conflict" description="In Ref. 1; BAC41102." evidence="14" ref="1">
    <original>L</original>
    <variation>R</variation>
    <location>
        <position position="123"/>
    </location>
</feature>
<feature type="strand" evidence="16">
    <location>
        <begin position="22"/>
        <end position="29"/>
    </location>
</feature>
<feature type="strand" evidence="16">
    <location>
        <begin position="35"/>
        <end position="41"/>
    </location>
</feature>
<feature type="helix" evidence="16">
    <location>
        <begin position="46"/>
        <end position="56"/>
    </location>
</feature>
<feature type="helix" evidence="16">
    <location>
        <begin position="57"/>
        <end position="59"/>
    </location>
</feature>
<feature type="turn" evidence="16">
    <location>
        <begin position="61"/>
        <end position="64"/>
    </location>
</feature>
<feature type="helix" evidence="16">
    <location>
        <begin position="69"/>
        <end position="71"/>
    </location>
</feature>
<feature type="strand" evidence="16">
    <location>
        <begin position="72"/>
        <end position="81"/>
    </location>
</feature>
<feature type="strand" evidence="16">
    <location>
        <begin position="83"/>
        <end position="85"/>
    </location>
</feature>
<feature type="strand" evidence="16">
    <location>
        <begin position="91"/>
        <end position="93"/>
    </location>
</feature>
<feature type="helix" evidence="16">
    <location>
        <begin position="94"/>
        <end position="96"/>
    </location>
</feature>
<feature type="strand" evidence="16">
    <location>
        <begin position="98"/>
        <end position="101"/>
    </location>
</feature>
<feature type="strand" evidence="16">
    <location>
        <begin position="103"/>
        <end position="108"/>
    </location>
</feature>
<feature type="helix" evidence="17">
    <location>
        <begin position="118"/>
        <end position="124"/>
    </location>
</feature>
<feature type="helix" evidence="17">
    <location>
        <begin position="129"/>
        <end position="133"/>
    </location>
</feature>
<feature type="helix" evidence="17">
    <location>
        <begin position="137"/>
        <end position="159"/>
    </location>
</feature>
<feature type="helix" evidence="17">
    <location>
        <begin position="164"/>
        <end position="169"/>
    </location>
</feature>
<feature type="helix" evidence="16">
    <location>
        <begin position="178"/>
        <end position="180"/>
    </location>
</feature>
<feature type="helix" evidence="17">
    <location>
        <begin position="182"/>
        <end position="185"/>
    </location>
</feature>
<feature type="strand" evidence="17">
    <location>
        <begin position="186"/>
        <end position="189"/>
    </location>
</feature>
<feature type="strand" evidence="17">
    <location>
        <begin position="191"/>
        <end position="199"/>
    </location>
</feature>
<feature type="strand" evidence="17">
    <location>
        <begin position="204"/>
        <end position="208"/>
    </location>
</feature>
<feature type="helix" evidence="17">
    <location>
        <begin position="215"/>
        <end position="227"/>
    </location>
</feature>
<feature type="helix" evidence="17">
    <location>
        <begin position="237"/>
        <end position="239"/>
    </location>
</feature>
<feature type="strand" evidence="17">
    <location>
        <begin position="240"/>
        <end position="244"/>
    </location>
</feature>
<feature type="strand" evidence="17">
    <location>
        <begin position="253"/>
        <end position="255"/>
    </location>
</feature>
<feature type="turn" evidence="17">
    <location>
        <begin position="257"/>
        <end position="259"/>
    </location>
</feature>
<feature type="helix" evidence="17">
    <location>
        <begin position="261"/>
        <end position="268"/>
    </location>
</feature>
<feature type="strand" evidence="17">
    <location>
        <begin position="274"/>
        <end position="279"/>
    </location>
</feature>
<feature type="helix" evidence="17">
    <location>
        <begin position="280"/>
        <end position="295"/>
    </location>
</feature>
<feature type="strand" evidence="17">
    <location>
        <begin position="325"/>
        <end position="334"/>
    </location>
</feature>
<feature type="strand" evidence="17">
    <location>
        <begin position="347"/>
        <end position="353"/>
    </location>
</feature>
<feature type="strand" evidence="16">
    <location>
        <begin position="356"/>
        <end position="359"/>
    </location>
</feature>
<feature type="helix" evidence="17">
    <location>
        <begin position="369"/>
        <end position="371"/>
    </location>
</feature>
<feature type="strand" evidence="17">
    <location>
        <begin position="377"/>
        <end position="384"/>
    </location>
</feature>
<feature type="turn" evidence="17">
    <location>
        <begin position="385"/>
        <end position="387"/>
    </location>
</feature>
<feature type="strand" evidence="17">
    <location>
        <begin position="393"/>
        <end position="398"/>
    </location>
</feature>
<feature type="strand" evidence="17">
    <location>
        <begin position="433"/>
        <end position="440"/>
    </location>
</feature>
<feature type="strand" evidence="17">
    <location>
        <begin position="449"/>
        <end position="454"/>
    </location>
</feature>
<feature type="strand" evidence="16">
    <location>
        <begin position="465"/>
        <end position="467"/>
    </location>
</feature>
<feature type="strand" evidence="17">
    <location>
        <begin position="484"/>
        <end position="489"/>
    </location>
</feature>
<feature type="strand" evidence="16">
    <location>
        <begin position="493"/>
        <end position="495"/>
    </location>
</feature>
<feature type="helix" evidence="17">
    <location>
        <begin position="502"/>
        <end position="513"/>
    </location>
</feature>
<feature type="helix" evidence="17">
    <location>
        <begin position="529"/>
        <end position="536"/>
    </location>
</feature>
<feature type="helix" evidence="17">
    <location>
        <begin position="546"/>
        <end position="554"/>
    </location>
</feature>
<feature type="helix" evidence="17">
    <location>
        <begin position="556"/>
        <end position="562"/>
    </location>
</feature>
<feature type="helix" evidence="17">
    <location>
        <begin position="564"/>
        <end position="566"/>
    </location>
</feature>
<feature type="helix" evidence="17">
    <location>
        <begin position="567"/>
        <end position="570"/>
    </location>
</feature>
<feature type="helix" evidence="17">
    <location>
        <begin position="579"/>
        <end position="590"/>
    </location>
</feature>
<feature type="helix" evidence="17">
    <location>
        <begin position="597"/>
        <end position="600"/>
    </location>
</feature>
<feature type="helix" evidence="17">
    <location>
        <begin position="601"/>
        <end position="604"/>
    </location>
</feature>
<feature type="helix" evidence="17">
    <location>
        <begin position="611"/>
        <end position="621"/>
    </location>
</feature>
<feature type="helix" evidence="17">
    <location>
        <begin position="626"/>
        <end position="629"/>
    </location>
</feature>
<feature type="helix" evidence="17">
    <location>
        <begin position="633"/>
        <end position="642"/>
    </location>
</feature>
<feature type="strand" evidence="17">
    <location>
        <begin position="644"/>
        <end position="647"/>
    </location>
</feature>
<feature type="helix" evidence="17">
    <location>
        <begin position="649"/>
        <end position="660"/>
    </location>
</feature>
<feature type="helix" evidence="17">
    <location>
        <begin position="662"/>
        <end position="673"/>
    </location>
</feature>
<feature type="strand" evidence="17">
    <location>
        <begin position="675"/>
        <end position="678"/>
    </location>
</feature>
<feature type="turn" evidence="17">
    <location>
        <begin position="679"/>
        <end position="681"/>
    </location>
</feature>
<feature type="helix" evidence="17">
    <location>
        <begin position="682"/>
        <end position="695"/>
    </location>
</feature>
<feature type="turn" evidence="17">
    <location>
        <begin position="697"/>
        <end position="699"/>
    </location>
</feature>
<feature type="helix" evidence="17">
    <location>
        <begin position="700"/>
        <end position="723"/>
    </location>
</feature>
<feature type="turn" evidence="17">
    <location>
        <begin position="724"/>
        <end position="726"/>
    </location>
</feature>
<feature type="helix" evidence="17">
    <location>
        <begin position="729"/>
        <end position="740"/>
    </location>
</feature>
<feature type="helix" evidence="17">
    <location>
        <begin position="743"/>
        <end position="749"/>
    </location>
</feature>
<feature type="strand" evidence="17">
    <location>
        <begin position="750"/>
        <end position="753"/>
    </location>
</feature>
<feature type="strand" evidence="17">
    <location>
        <begin position="758"/>
        <end position="762"/>
    </location>
</feature>
<feature type="helix" evidence="17">
    <location>
        <begin position="767"/>
        <end position="769"/>
    </location>
</feature>
<feature type="strand" evidence="17">
    <location>
        <begin position="780"/>
        <end position="784"/>
    </location>
</feature>
<feature type="turn" evidence="16">
    <location>
        <begin position="787"/>
        <end position="789"/>
    </location>
</feature>
<feature type="strand" evidence="17">
    <location>
        <begin position="795"/>
        <end position="802"/>
    </location>
</feature>
<feature type="helix" evidence="17">
    <location>
        <begin position="805"/>
        <end position="823"/>
    </location>
</feature>
<feature type="strand" evidence="17">
    <location>
        <begin position="835"/>
        <end position="839"/>
    </location>
</feature>
<feature type="strand" evidence="17">
    <location>
        <begin position="842"/>
        <end position="846"/>
    </location>
</feature>
<feature type="strand" evidence="17">
    <location>
        <begin position="849"/>
        <end position="853"/>
    </location>
</feature>
<feature type="helix" evidence="17">
    <location>
        <begin position="854"/>
        <end position="858"/>
    </location>
</feature>
<feature type="strand" evidence="16">
    <location>
        <begin position="859"/>
        <end position="861"/>
    </location>
</feature>
<feature type="turn" evidence="17">
    <location>
        <begin position="867"/>
        <end position="870"/>
    </location>
</feature>
<feature type="helix" evidence="17">
    <location>
        <begin position="874"/>
        <end position="882"/>
    </location>
</feature>
<feature type="helix" evidence="17">
    <location>
        <begin position="886"/>
        <end position="908"/>
    </location>
</feature>
<feature type="strand" evidence="17">
    <location>
        <begin position="918"/>
        <end position="922"/>
    </location>
</feature>
<feature type="strand" evidence="17">
    <location>
        <begin position="927"/>
        <end position="929"/>
    </location>
</feature>
<feature type="helix" evidence="16">
    <location>
        <begin position="942"/>
        <end position="944"/>
    </location>
</feature>
<feature type="helix" evidence="17">
    <location>
        <begin position="956"/>
        <end position="962"/>
    </location>
</feature>
<feature type="turn" evidence="17">
    <location>
        <begin position="963"/>
        <end position="965"/>
    </location>
</feature>
<feature type="helix" evidence="17">
    <location>
        <begin position="970"/>
        <end position="989"/>
    </location>
</feature>
<feature type="helix" evidence="17">
    <location>
        <begin position="991"/>
        <end position="1000"/>
    </location>
</feature>
<feature type="helix" evidence="17">
    <location>
        <begin position="1001"/>
        <end position="1003"/>
    </location>
</feature>
<feature type="helix" evidence="17">
    <location>
        <begin position="1012"/>
        <end position="1015"/>
    </location>
</feature>
<feature type="helix" evidence="17">
    <location>
        <begin position="1016"/>
        <end position="1021"/>
    </location>
</feature>
<feature type="turn" evidence="17">
    <location>
        <begin position="1022"/>
        <end position="1025"/>
    </location>
</feature>
<feature type="helix" evidence="17">
    <location>
        <begin position="1028"/>
        <end position="1044"/>
    </location>
</feature>
<feature type="helix" evidence="17">
    <location>
        <begin position="1046"/>
        <end position="1058"/>
    </location>
</feature>
<proteinExistence type="evidence at protein level"/>
<name>PK3CB_MOUSE</name>
<accession>Q8BTI9</accession>
<accession>Q3U4Q1</accession>
<dbReference type="EC" id="2.7.1.153" evidence="2"/>
<dbReference type="EC" id="2.7.11.1" evidence="2"/>
<dbReference type="EMBL" id="AK090116">
    <property type="protein sequence ID" value="BAC41102.1"/>
    <property type="molecule type" value="mRNA"/>
</dbReference>
<dbReference type="EMBL" id="AK154106">
    <property type="protein sequence ID" value="BAE32380.1"/>
    <property type="molecule type" value="mRNA"/>
</dbReference>
<dbReference type="EMBL" id="CH466560">
    <property type="protein sequence ID" value="EDL20998.1"/>
    <property type="molecule type" value="Genomic_DNA"/>
</dbReference>
<dbReference type="CCDS" id="CCDS23432.1"/>
<dbReference type="RefSeq" id="NP_083370.2">
    <property type="nucleotide sequence ID" value="NM_029094.3"/>
</dbReference>
<dbReference type="RefSeq" id="XP_011241131.1">
    <property type="nucleotide sequence ID" value="XM_011242829.4"/>
</dbReference>
<dbReference type="RefSeq" id="XP_011241132.1">
    <property type="nucleotide sequence ID" value="XM_011242830.4"/>
</dbReference>
<dbReference type="PDB" id="2Y3A">
    <property type="method" value="X-ray"/>
    <property type="resolution" value="3.30 A"/>
    <property type="chains" value="A=1-1064"/>
</dbReference>
<dbReference type="PDB" id="4BFR">
    <property type="method" value="X-ray"/>
    <property type="resolution" value="2.80 A"/>
    <property type="chains" value="A/B=114-1064"/>
</dbReference>
<dbReference type="PDBsum" id="2Y3A"/>
<dbReference type="PDBsum" id="4BFR"/>
<dbReference type="SMR" id="Q8BTI9"/>
<dbReference type="BioGRID" id="217006">
    <property type="interactions" value="6"/>
</dbReference>
<dbReference type="CORUM" id="Q8BTI9"/>
<dbReference type="DIP" id="DIP-49395N"/>
<dbReference type="FunCoup" id="Q8BTI9">
    <property type="interactions" value="3623"/>
</dbReference>
<dbReference type="IntAct" id="Q8BTI9">
    <property type="interactions" value="11"/>
</dbReference>
<dbReference type="STRING" id="10090.ENSMUSP00000035037"/>
<dbReference type="BindingDB" id="Q8BTI9"/>
<dbReference type="ChEMBL" id="CHEMBL4739696"/>
<dbReference type="GlyGen" id="Q8BTI9">
    <property type="glycosylation" value="2 sites, 1 O-linked glycan (2 sites)"/>
</dbReference>
<dbReference type="iPTMnet" id="Q8BTI9"/>
<dbReference type="PhosphoSitePlus" id="Q8BTI9"/>
<dbReference type="PaxDb" id="10090-ENSMUSP00000035037"/>
<dbReference type="ProteomicsDB" id="289436"/>
<dbReference type="Pumba" id="Q8BTI9"/>
<dbReference type="Antibodypedia" id="33450">
    <property type="antibodies" value="541 antibodies from 41 providers"/>
</dbReference>
<dbReference type="DNASU" id="74769"/>
<dbReference type="Ensembl" id="ENSMUST00000035037.14">
    <property type="protein sequence ID" value="ENSMUSP00000035037.8"/>
    <property type="gene ID" value="ENSMUSG00000032462.15"/>
</dbReference>
<dbReference type="GeneID" id="74769"/>
<dbReference type="KEGG" id="mmu:74769"/>
<dbReference type="UCSC" id="uc009rdv.2">
    <property type="organism name" value="mouse"/>
</dbReference>
<dbReference type="AGR" id="MGI:1922019"/>
<dbReference type="CTD" id="5291"/>
<dbReference type="MGI" id="MGI:1922019">
    <property type="gene designation" value="Pik3cb"/>
</dbReference>
<dbReference type="VEuPathDB" id="HostDB:ENSMUSG00000032462"/>
<dbReference type="eggNOG" id="KOG0904">
    <property type="taxonomic scope" value="Eukaryota"/>
</dbReference>
<dbReference type="GeneTree" id="ENSGT00940000157522"/>
<dbReference type="HOGENOM" id="CLU_002191_1_3_1"/>
<dbReference type="InParanoid" id="Q8BTI9"/>
<dbReference type="OMA" id="KGCKQHV"/>
<dbReference type="OrthoDB" id="67688at2759"/>
<dbReference type="PhylomeDB" id="Q8BTI9"/>
<dbReference type="TreeFam" id="TF102031"/>
<dbReference type="Reactome" id="R-MMU-109704">
    <property type="pathway name" value="PI3K Cascade"/>
</dbReference>
<dbReference type="Reactome" id="R-MMU-112399">
    <property type="pathway name" value="IRS-mediated signalling"/>
</dbReference>
<dbReference type="Reactome" id="R-MMU-114604">
    <property type="pathway name" value="GPVI-mediated activation cascade"/>
</dbReference>
<dbReference type="Reactome" id="R-MMU-1257604">
    <property type="pathway name" value="PIP3 activates AKT signaling"/>
</dbReference>
<dbReference type="Reactome" id="R-MMU-1660499">
    <property type="pathway name" value="Synthesis of PIPs at the plasma membrane"/>
</dbReference>
<dbReference type="Reactome" id="R-MMU-186763">
    <property type="pathway name" value="Downstream signal transduction"/>
</dbReference>
<dbReference type="Reactome" id="R-MMU-198203">
    <property type="pathway name" value="PI3K/AKT activation"/>
</dbReference>
<dbReference type="Reactome" id="R-MMU-201556">
    <property type="pathway name" value="Signaling by ALK"/>
</dbReference>
<dbReference type="Reactome" id="R-MMU-202424">
    <property type="pathway name" value="Downstream TCR signaling"/>
</dbReference>
<dbReference type="Reactome" id="R-MMU-2029485">
    <property type="pathway name" value="Role of phospholipids in phagocytosis"/>
</dbReference>
<dbReference type="Reactome" id="R-MMU-210993">
    <property type="pathway name" value="Tie2 Signaling"/>
</dbReference>
<dbReference type="Reactome" id="R-MMU-2424491">
    <property type="pathway name" value="DAP12 signaling"/>
</dbReference>
<dbReference type="Reactome" id="R-MMU-2730905">
    <property type="pathway name" value="Role of LAT2/NTAL/LAB on calcium mobilization"/>
</dbReference>
<dbReference type="Reactome" id="R-MMU-389357">
    <property type="pathway name" value="CD28 dependent PI3K/Akt signaling"/>
</dbReference>
<dbReference type="Reactome" id="R-MMU-4420097">
    <property type="pathway name" value="VEGFA-VEGFR2 Pathway"/>
</dbReference>
<dbReference type="Reactome" id="R-MMU-512988">
    <property type="pathway name" value="Interleukin-3, Interleukin-5 and GM-CSF signaling"/>
</dbReference>
<dbReference type="Reactome" id="R-MMU-5673001">
    <property type="pathway name" value="RAF/MAP kinase cascade"/>
</dbReference>
<dbReference type="Reactome" id="R-MMU-6811558">
    <property type="pathway name" value="PI5P, PP2A and IER3 Regulate PI3K/AKT Signaling"/>
</dbReference>
<dbReference type="Reactome" id="R-MMU-8853659">
    <property type="pathway name" value="RET signaling"/>
</dbReference>
<dbReference type="Reactome" id="R-MMU-9027276">
    <property type="pathway name" value="Erythropoietin activates Phosphoinositide-3-kinase (PI3K)"/>
</dbReference>
<dbReference type="Reactome" id="R-MMU-912526">
    <property type="pathway name" value="Interleukin receptor SHC signaling"/>
</dbReference>
<dbReference type="Reactome" id="R-MMU-912631">
    <property type="pathway name" value="Regulation of signaling by CBL"/>
</dbReference>
<dbReference type="Reactome" id="R-MMU-9842663">
    <property type="pathway name" value="Signaling by LTK"/>
</dbReference>
<dbReference type="Reactome" id="R-MMU-9927354">
    <property type="pathway name" value="Co-stimulation by ICOS"/>
</dbReference>
<dbReference type="UniPathway" id="UPA00220"/>
<dbReference type="BioGRID-ORCS" id="74769">
    <property type="hits" value="1 hit in 76 CRISPR screens"/>
</dbReference>
<dbReference type="ChiTaRS" id="Pik3cb">
    <property type="organism name" value="mouse"/>
</dbReference>
<dbReference type="EvolutionaryTrace" id="Q8BTI9"/>
<dbReference type="PRO" id="PR:Q8BTI9"/>
<dbReference type="Proteomes" id="UP000000589">
    <property type="component" value="Chromosome 9"/>
</dbReference>
<dbReference type="RNAct" id="Q8BTI9">
    <property type="molecule type" value="protein"/>
</dbReference>
<dbReference type="Bgee" id="ENSMUSG00000032462">
    <property type="expression patterns" value="Expressed in ectoplacental cone and 204 other cell types or tissues"/>
</dbReference>
<dbReference type="ExpressionAtlas" id="Q8BTI9">
    <property type="expression patterns" value="baseline and differential"/>
</dbReference>
<dbReference type="GO" id="GO:0005829">
    <property type="term" value="C:cytosol"/>
    <property type="evidence" value="ECO:0000304"/>
    <property type="project" value="Reactome"/>
</dbReference>
<dbReference type="GO" id="GO:0030496">
    <property type="term" value="C:midbody"/>
    <property type="evidence" value="ECO:0007669"/>
    <property type="project" value="Ensembl"/>
</dbReference>
<dbReference type="GO" id="GO:0005730">
    <property type="term" value="C:nucleolus"/>
    <property type="evidence" value="ECO:0007669"/>
    <property type="project" value="Ensembl"/>
</dbReference>
<dbReference type="GO" id="GO:0005654">
    <property type="term" value="C:nucleoplasm"/>
    <property type="evidence" value="ECO:0007669"/>
    <property type="project" value="Ensembl"/>
</dbReference>
<dbReference type="GO" id="GO:0005634">
    <property type="term" value="C:nucleus"/>
    <property type="evidence" value="ECO:0000314"/>
    <property type="project" value="BHF-UCL"/>
</dbReference>
<dbReference type="GO" id="GO:0005943">
    <property type="term" value="C:phosphatidylinositol 3-kinase complex, class IA"/>
    <property type="evidence" value="ECO:0007669"/>
    <property type="project" value="Ensembl"/>
</dbReference>
<dbReference type="GO" id="GO:0016303">
    <property type="term" value="F:1-phosphatidylinositol-3-kinase activity"/>
    <property type="evidence" value="ECO:0000315"/>
    <property type="project" value="MGI"/>
</dbReference>
<dbReference type="GO" id="GO:0046934">
    <property type="term" value="F:1-phosphatidylinositol-4,5-bisphosphate 3-kinase activity"/>
    <property type="evidence" value="ECO:0000250"/>
    <property type="project" value="UniProtKB"/>
</dbReference>
<dbReference type="GO" id="GO:0005524">
    <property type="term" value="F:ATP binding"/>
    <property type="evidence" value="ECO:0007669"/>
    <property type="project" value="UniProtKB-KW"/>
</dbReference>
<dbReference type="GO" id="GO:0043560">
    <property type="term" value="F:insulin receptor substrate binding"/>
    <property type="evidence" value="ECO:0000353"/>
    <property type="project" value="MGI"/>
</dbReference>
<dbReference type="GO" id="GO:0106310">
    <property type="term" value="F:protein serine kinase activity"/>
    <property type="evidence" value="ECO:0000250"/>
    <property type="project" value="UniProtKB"/>
</dbReference>
<dbReference type="GO" id="GO:0060055">
    <property type="term" value="P:angiogenesis involved in wound healing"/>
    <property type="evidence" value="ECO:0000315"/>
    <property type="project" value="MGI"/>
</dbReference>
<dbReference type="GO" id="GO:0006914">
    <property type="term" value="P:autophagy"/>
    <property type="evidence" value="ECO:0007669"/>
    <property type="project" value="UniProtKB-KW"/>
</dbReference>
<dbReference type="GO" id="GO:0040016">
    <property type="term" value="P:embryonic cleavage"/>
    <property type="evidence" value="ECO:0000315"/>
    <property type="project" value="MGI"/>
</dbReference>
<dbReference type="GO" id="GO:0006897">
    <property type="term" value="P:endocytosis"/>
    <property type="evidence" value="ECO:0007669"/>
    <property type="project" value="UniProtKB-KW"/>
</dbReference>
<dbReference type="GO" id="GO:0001935">
    <property type="term" value="P:endothelial cell proliferation"/>
    <property type="evidence" value="ECO:0000315"/>
    <property type="project" value="MGI"/>
</dbReference>
<dbReference type="GO" id="GO:0007156">
    <property type="term" value="P:homophilic cell adhesion via plasma membrane adhesion molecules"/>
    <property type="evidence" value="ECO:0000315"/>
    <property type="project" value="MGI"/>
</dbReference>
<dbReference type="GO" id="GO:0006874">
    <property type="term" value="P:intracellular calcium ion homeostasis"/>
    <property type="evidence" value="ECO:0000315"/>
    <property type="project" value="MGI"/>
</dbReference>
<dbReference type="GO" id="GO:0042267">
    <property type="term" value="P:natural killer cell mediated cytotoxicity"/>
    <property type="evidence" value="ECO:0007669"/>
    <property type="project" value="Ensembl"/>
</dbReference>
<dbReference type="GO" id="GO:1903298">
    <property type="term" value="P:negative regulation of hypoxia-induced intrinsic apoptotic signaling pathway"/>
    <property type="evidence" value="ECO:0000315"/>
    <property type="project" value="BHF-UCL"/>
</dbReference>
<dbReference type="GO" id="GO:0043409">
    <property type="term" value="P:negative regulation of MAPK cascade"/>
    <property type="evidence" value="ECO:0000315"/>
    <property type="project" value="BHF-UCL"/>
</dbReference>
<dbReference type="GO" id="GO:0051898">
    <property type="term" value="P:negative regulation of phosphatidylinositol 3-kinase/protein kinase B signal transduction"/>
    <property type="evidence" value="ECO:0000315"/>
    <property type="project" value="BHF-UCL"/>
</dbReference>
<dbReference type="GO" id="GO:1903671">
    <property type="term" value="P:negative regulation of sprouting angiogenesis"/>
    <property type="evidence" value="ECO:0007669"/>
    <property type="project" value="Ensembl"/>
</dbReference>
<dbReference type="GO" id="GO:1900747">
    <property type="term" value="P:negative regulation of vascular endothelial growth factor signaling pathway"/>
    <property type="evidence" value="ECO:0007669"/>
    <property type="project" value="Ensembl"/>
</dbReference>
<dbReference type="GO" id="GO:0043491">
    <property type="term" value="P:phosphatidylinositol 3-kinase/protein kinase B signal transduction"/>
    <property type="evidence" value="ECO:0000315"/>
    <property type="project" value="BHF-UCL"/>
</dbReference>
<dbReference type="GO" id="GO:0046854">
    <property type="term" value="P:phosphatidylinositol phosphate biosynthetic process"/>
    <property type="evidence" value="ECO:0000250"/>
    <property type="project" value="UniProtKB"/>
</dbReference>
<dbReference type="GO" id="GO:0030168">
    <property type="term" value="P:platelet activation"/>
    <property type="evidence" value="ECO:0000315"/>
    <property type="project" value="MGI"/>
</dbReference>
<dbReference type="GO" id="GO:0010595">
    <property type="term" value="P:positive regulation of endothelial cell migration"/>
    <property type="evidence" value="ECO:0000316"/>
    <property type="project" value="BHF-UCL"/>
</dbReference>
<dbReference type="GO" id="GO:0010628">
    <property type="term" value="P:positive regulation of gene expression"/>
    <property type="evidence" value="ECO:0000266"/>
    <property type="project" value="MGI"/>
</dbReference>
<dbReference type="GO" id="GO:0033031">
    <property type="term" value="P:positive regulation of neutrophil apoptotic process"/>
    <property type="evidence" value="ECO:0007669"/>
    <property type="project" value="Ensembl"/>
</dbReference>
<dbReference type="GO" id="GO:0045429">
    <property type="term" value="P:positive regulation of nitric oxide biosynthetic process"/>
    <property type="evidence" value="ECO:0007669"/>
    <property type="project" value="Ensembl"/>
</dbReference>
<dbReference type="GO" id="GO:0035022">
    <property type="term" value="P:positive regulation of Rac protein signal transduction"/>
    <property type="evidence" value="ECO:0000316"/>
    <property type="project" value="BHF-UCL"/>
</dbReference>
<dbReference type="GO" id="GO:0001952">
    <property type="term" value="P:regulation of cell-matrix adhesion"/>
    <property type="evidence" value="ECO:0000315"/>
    <property type="project" value="MGI"/>
</dbReference>
<dbReference type="GO" id="GO:0002931">
    <property type="term" value="P:response to ischemia"/>
    <property type="evidence" value="ECO:0000315"/>
    <property type="project" value="BHF-UCL"/>
</dbReference>
<dbReference type="GO" id="GO:0003376">
    <property type="term" value="P:sphingosine-1-phosphate receptor signaling pathway"/>
    <property type="evidence" value="ECO:0000316"/>
    <property type="project" value="BHF-UCL"/>
</dbReference>
<dbReference type="CDD" id="cd08693">
    <property type="entry name" value="C2_PI3K_class_I_beta_delta"/>
    <property type="match status" value="1"/>
</dbReference>
<dbReference type="CDD" id="cd00872">
    <property type="entry name" value="PI3Ka_I"/>
    <property type="match status" value="1"/>
</dbReference>
<dbReference type="CDD" id="cd05173">
    <property type="entry name" value="PI3Kc_IA_beta"/>
    <property type="match status" value="1"/>
</dbReference>
<dbReference type="DisProt" id="DP02790"/>
<dbReference type="FunFam" id="1.10.1070.11:FF:000001">
    <property type="entry name" value="Phosphatidylinositol 4,5-bisphosphate 3-kinase catalytic subunit"/>
    <property type="match status" value="1"/>
</dbReference>
<dbReference type="FunFam" id="2.60.40.150:FF:000046">
    <property type="entry name" value="Phosphatidylinositol 4,5-bisphosphate 3-kinase catalytic subunit"/>
    <property type="match status" value="1"/>
</dbReference>
<dbReference type="FunFam" id="1.25.40.70:FF:000004">
    <property type="entry name" value="Phosphatidylinositol 4,5-bisphosphate 3-kinase catalytic subunit beta"/>
    <property type="match status" value="1"/>
</dbReference>
<dbReference type="FunFam" id="3.30.1010.10:FF:000005">
    <property type="entry name" value="Phosphatidylinositol 4,5-bisphosphate 3-kinase catalytic subunit beta"/>
    <property type="match status" value="1"/>
</dbReference>
<dbReference type="FunFam" id="3.10.20.770:FF:000003">
    <property type="entry name" value="phosphatidylinositol 4,5-bisphosphate 3-kinase catalytic subunit beta isoform"/>
    <property type="match status" value="1"/>
</dbReference>
<dbReference type="Gene3D" id="3.10.20.770">
    <property type="match status" value="1"/>
</dbReference>
<dbReference type="Gene3D" id="2.60.40.150">
    <property type="entry name" value="C2 domain"/>
    <property type="match status" value="1"/>
</dbReference>
<dbReference type="Gene3D" id="1.10.1070.11">
    <property type="entry name" value="Phosphatidylinositol 3-/4-kinase, catalytic domain"/>
    <property type="match status" value="1"/>
</dbReference>
<dbReference type="Gene3D" id="3.30.1010.10">
    <property type="entry name" value="Phosphatidylinositol 3-kinase Catalytic Subunit, Chain A, domain 4"/>
    <property type="match status" value="1"/>
</dbReference>
<dbReference type="Gene3D" id="1.25.40.70">
    <property type="entry name" value="Phosphatidylinositol 3-kinase, accessory domain (PIK)"/>
    <property type="match status" value="1"/>
</dbReference>
<dbReference type="InterPro" id="IPR016024">
    <property type="entry name" value="ARM-type_fold"/>
</dbReference>
<dbReference type="InterPro" id="IPR035892">
    <property type="entry name" value="C2_domain_sf"/>
</dbReference>
<dbReference type="InterPro" id="IPR011009">
    <property type="entry name" value="Kinase-like_dom_sf"/>
</dbReference>
<dbReference type="InterPro" id="IPR000403">
    <property type="entry name" value="PI3/4_kinase_cat_dom"/>
</dbReference>
<dbReference type="InterPro" id="IPR036940">
    <property type="entry name" value="PI3/4_kinase_cat_sf"/>
</dbReference>
<dbReference type="InterPro" id="IPR018936">
    <property type="entry name" value="PI3/4_kinase_CS"/>
</dbReference>
<dbReference type="InterPro" id="IPR002420">
    <property type="entry name" value="PI3K-type_C2_dom"/>
</dbReference>
<dbReference type="InterPro" id="IPR003113">
    <property type="entry name" value="PI3K_ABD"/>
</dbReference>
<dbReference type="InterPro" id="IPR001263">
    <property type="entry name" value="PI3K_accessory_dom"/>
</dbReference>
<dbReference type="InterPro" id="IPR042236">
    <property type="entry name" value="PI3K_accessory_sf"/>
</dbReference>
<dbReference type="InterPro" id="IPR000341">
    <property type="entry name" value="PI3K_Ras-bd_dom"/>
</dbReference>
<dbReference type="InterPro" id="IPR037702">
    <property type="entry name" value="PI3Kbeta_dom"/>
</dbReference>
<dbReference type="InterPro" id="IPR015433">
    <property type="entry name" value="PI_Kinase"/>
</dbReference>
<dbReference type="InterPro" id="IPR029071">
    <property type="entry name" value="Ubiquitin-like_domsf"/>
</dbReference>
<dbReference type="PANTHER" id="PTHR10048:SF33">
    <property type="entry name" value="PHOSPHATIDYLINOSITOL 4,5-BISPHOSPHATE 3-KINASE CATALYTIC SUBUNIT BETA ISOFORM"/>
    <property type="match status" value="1"/>
</dbReference>
<dbReference type="PANTHER" id="PTHR10048">
    <property type="entry name" value="PHOSPHATIDYLINOSITOL KINASE"/>
    <property type="match status" value="1"/>
</dbReference>
<dbReference type="Pfam" id="PF00454">
    <property type="entry name" value="PI3_PI4_kinase"/>
    <property type="match status" value="1"/>
</dbReference>
<dbReference type="Pfam" id="PF00792">
    <property type="entry name" value="PI3K_C2"/>
    <property type="match status" value="1"/>
</dbReference>
<dbReference type="Pfam" id="PF02192">
    <property type="entry name" value="PI3K_p85B"/>
    <property type="match status" value="1"/>
</dbReference>
<dbReference type="Pfam" id="PF00794">
    <property type="entry name" value="PI3K_rbd"/>
    <property type="match status" value="1"/>
</dbReference>
<dbReference type="Pfam" id="PF00613">
    <property type="entry name" value="PI3Ka"/>
    <property type="match status" value="1"/>
</dbReference>
<dbReference type="SMART" id="SM00142">
    <property type="entry name" value="PI3K_C2"/>
    <property type="match status" value="1"/>
</dbReference>
<dbReference type="SMART" id="SM00143">
    <property type="entry name" value="PI3K_p85B"/>
    <property type="match status" value="1"/>
</dbReference>
<dbReference type="SMART" id="SM00144">
    <property type="entry name" value="PI3K_rbd"/>
    <property type="match status" value="1"/>
</dbReference>
<dbReference type="SMART" id="SM00145">
    <property type="entry name" value="PI3Ka"/>
    <property type="match status" value="1"/>
</dbReference>
<dbReference type="SMART" id="SM00146">
    <property type="entry name" value="PI3Kc"/>
    <property type="match status" value="1"/>
</dbReference>
<dbReference type="SUPFAM" id="SSF48371">
    <property type="entry name" value="ARM repeat"/>
    <property type="match status" value="1"/>
</dbReference>
<dbReference type="SUPFAM" id="SSF49562">
    <property type="entry name" value="C2 domain (Calcium/lipid-binding domain, CaLB)"/>
    <property type="match status" value="1"/>
</dbReference>
<dbReference type="SUPFAM" id="SSF56112">
    <property type="entry name" value="Protein kinase-like (PK-like)"/>
    <property type="match status" value="1"/>
</dbReference>
<dbReference type="SUPFAM" id="SSF54236">
    <property type="entry name" value="Ubiquitin-like"/>
    <property type="match status" value="1"/>
</dbReference>
<dbReference type="PROSITE" id="PS51547">
    <property type="entry name" value="C2_PI3K"/>
    <property type="match status" value="1"/>
</dbReference>
<dbReference type="PROSITE" id="PS00915">
    <property type="entry name" value="PI3_4_KINASE_1"/>
    <property type="match status" value="1"/>
</dbReference>
<dbReference type="PROSITE" id="PS00916">
    <property type="entry name" value="PI3_4_KINASE_2"/>
    <property type="match status" value="1"/>
</dbReference>
<dbReference type="PROSITE" id="PS50290">
    <property type="entry name" value="PI3_4_KINASE_3"/>
    <property type="match status" value="1"/>
</dbReference>
<dbReference type="PROSITE" id="PS51544">
    <property type="entry name" value="PI3K_ABD"/>
    <property type="match status" value="1"/>
</dbReference>
<dbReference type="PROSITE" id="PS51546">
    <property type="entry name" value="PI3K_RBD"/>
    <property type="match status" value="1"/>
</dbReference>
<dbReference type="PROSITE" id="PS51545">
    <property type="entry name" value="PIK_HELICAL"/>
    <property type="match status" value="1"/>
</dbReference>
<comment type="function">
    <text evidence="2 8 9 10 11 12 13">Phosphoinositide-3-kinase (PI3K) phosphorylates phosphatidylinositol (PI) derivatives at position 3 of the inositol ring to produce 3-phosphoinositides. Uses ATP and PtdIns(4,5)P2 (phosphatidylinositol 4,5-bisphosphate) to generate phosphatidylinositol 3,4,5-trisphosphate (PIP3) (By similarity). PIP3 plays a key role by recruiting PH domain-containing proteins to the membrane, including AKT1 and PDPK1, activating signaling cascades involved in cell growth, survival, proliferation, motility and morphology. Involved in the activation of AKT1 upon stimulation by G-protein coupled receptors (GPCRs) ligands such as CXCL12, sphingosine 1-phosphate, and lysophosphatidic acid. May also act downstream receptor tyrosine kinases. Required in different signaling pathways for stable platelet adhesion and aggregation. Plays a role in platelet activation signaling triggered by GPCRs, alpha-IIb/beta-3 integrins (ITGA2B/ ITGB3) and ITAM (immunoreceptor tyrosine-based activation motif)-bearing receptors such as GP6. Regulates the strength of adhesion of ITGA2B/ ITGB3 activated receptors necessary for the cellular transmission of contractile forces. Required for platelet aggregation induced by F2 (thrombin) and thromboxane A2 (TXA2). Has a role in cell survival. May have a role in cell migration. Involved in the early stage of autophagosome formation. Modulates the intracellular level of PtdIns3P (phosphatidylinositol 3-phosphate) and activates PIK3C3 kinase activity. May act as a scaffold, independently of its lipid kinase activity to positively regulate autophagy. May have a role in insulin signaling as scaffolding protein in which the lipid kinase activity is not required. May have a kinase-independent function in regulating cell proliferation and in clathrin-mediated endocytosis. Mediator of oncogenic signal in cell lines lacking PTEN. The lipid kinase activity is necessary for its role in oncogenic transformation. Required for the growth of ERBB2 and RAS driven tumors. Also has a protein kinase activity showing autophosphorylation.</text>
</comment>
<comment type="catalytic activity">
    <reaction evidence="2">
        <text>a 1,2-diacyl-sn-glycero-3-phospho-(1D-myo-inositol-4,5-bisphosphate) + ATP = a 1,2-diacyl-sn-glycero-3-phospho-(1D-myo-inositol-3,4,5-trisphosphate) + ADP + H(+)</text>
        <dbReference type="Rhea" id="RHEA:21292"/>
        <dbReference type="ChEBI" id="CHEBI:15378"/>
        <dbReference type="ChEBI" id="CHEBI:30616"/>
        <dbReference type="ChEBI" id="CHEBI:57836"/>
        <dbReference type="ChEBI" id="CHEBI:58456"/>
        <dbReference type="ChEBI" id="CHEBI:456216"/>
        <dbReference type="EC" id="2.7.1.153"/>
    </reaction>
    <physiologicalReaction direction="left-to-right" evidence="2">
        <dbReference type="Rhea" id="RHEA:21293"/>
    </physiologicalReaction>
</comment>
<comment type="catalytic activity">
    <reaction evidence="2">
        <text>1-octadecanoyl-2-(5Z,8Z,11Z,14Z)-eicosatetraenoyl-sn-glycero-3-phospho-1D-myo-inositol 4,5-bisphosphate + ATP = 1-octadecanoyl-2-(5Z,8Z,11Z,14Z-eicosatetraenoyl)-sn-glycero-3-phospho-(1D-myo-inositol 3,4,5-triphosphate) + ADP + H(+)</text>
        <dbReference type="Rhea" id="RHEA:43396"/>
        <dbReference type="ChEBI" id="CHEBI:15378"/>
        <dbReference type="ChEBI" id="CHEBI:30616"/>
        <dbReference type="ChEBI" id="CHEBI:77137"/>
        <dbReference type="ChEBI" id="CHEBI:83243"/>
        <dbReference type="ChEBI" id="CHEBI:456216"/>
    </reaction>
    <physiologicalReaction direction="left-to-right" evidence="2">
        <dbReference type="Rhea" id="RHEA:43397"/>
    </physiologicalReaction>
</comment>
<comment type="catalytic activity">
    <reaction evidence="2">
        <text>L-seryl-[protein] + ATP = O-phospho-L-seryl-[protein] + ADP + H(+)</text>
        <dbReference type="Rhea" id="RHEA:17989"/>
        <dbReference type="Rhea" id="RHEA-COMP:9863"/>
        <dbReference type="Rhea" id="RHEA-COMP:11604"/>
        <dbReference type="ChEBI" id="CHEBI:15378"/>
        <dbReference type="ChEBI" id="CHEBI:29999"/>
        <dbReference type="ChEBI" id="CHEBI:30616"/>
        <dbReference type="ChEBI" id="CHEBI:83421"/>
        <dbReference type="ChEBI" id="CHEBI:456216"/>
        <dbReference type="EC" id="2.7.11.1"/>
    </reaction>
    <physiologicalReaction direction="left-to-right" evidence="2">
        <dbReference type="Rhea" id="RHEA:17990"/>
    </physiologicalReaction>
</comment>
<comment type="pathway">
    <text evidence="2">Phospholipid metabolism; phosphatidylinositol phosphate biosynthesis.</text>
</comment>
<comment type="subunit">
    <text evidence="1 13">Heterodimer of a catalytic subunit PIK3CB and a p85 regulatory subunit (PIK3R1, PIK3R2 or PIK3R3). Interaction with PIK3R2 is required for nuclear localization and nuclear export (By similarity). Part of a complex with PIK3R1 and PTEN (By similarity). Binding to PTEN may antagonize the lipid kinase activity under normal growth conditions (By similarity). Part of a complex involved in autophagosome formation composed of PIK3C3 and PIK3R4. Interacts with BECN1, ATG14 and RAB5A.</text>
</comment>
<comment type="interaction">
    <interactant intactId="EBI-644672">
        <id>Q8BTI9</id>
    </interactant>
    <interactant intactId="EBI-641764">
        <id>P26450</id>
        <label>Pik3r1</label>
    </interactant>
    <organismsDiffer>false</organismsDiffer>
    <experiments>5</experiments>
</comment>
<comment type="subcellular location">
    <subcellularLocation>
        <location evidence="1">Cytoplasm</location>
    </subcellularLocation>
    <subcellularLocation>
        <location evidence="1">Nucleus</location>
    </subcellularLocation>
    <text>Interaction with PIK3R2 is required for nuclear localization and export.</text>
</comment>
<comment type="domain">
    <text evidence="1">The inhibitory interactions with PIK3R1 are mediated by the PI3K-ABD domain and the C2 PI3K-type domain with the iSH2 (inter-SH2) region of PIK3R1; the C2 PI3K-type domain, the PI3K helical domain, and the PI3K/PI4K kinase domain with the nSH2 (N-terminal SH2) region of PIK3R1; and the PI3K/PI4K kinase domain with the cSH2 (C-terminal SH2) region of PIK3R1. The inhibitory interaction between the PI3K-ABD domain and the C2 PI3K-type domain with the iSH2 (inter-SH2) region of PIK3R1 is weak. The nuclear localization signal (NLS) is required for its function in cell survival (By similarity).</text>
</comment>
<comment type="PTM">
    <text evidence="1">Phosphorylation at Ser-1064 down-regulates lipid kinase activity.</text>
</comment>
<comment type="PTM">
    <text evidence="2">Autophosphorylation at Ser-1064 negatively regulates the phosphatidylinositol-4,5-bisphosphate 3-kinase activity.</text>
</comment>
<comment type="disruption phenotype">
    <text evidence="9 10 12 13">Mice have defects in autophagosome formation. Have normal bleeding time but are resistant to thrombosis after arterial injury. Mice fail to induce tumors in a model of prostate tumor formation induced by Pten loss.</text>
</comment>
<comment type="similarity">
    <text evidence="4 6 7">Belongs to the PI3/PI4-kinase family.</text>
</comment>
<reference key="1">
    <citation type="journal article" date="2005" name="Science">
        <title>The transcriptional landscape of the mammalian genome.</title>
        <authorList>
            <person name="Carninci P."/>
            <person name="Kasukawa T."/>
            <person name="Katayama S."/>
            <person name="Gough J."/>
            <person name="Frith M.C."/>
            <person name="Maeda N."/>
            <person name="Oyama R."/>
            <person name="Ravasi T."/>
            <person name="Lenhard B."/>
            <person name="Wells C."/>
            <person name="Kodzius R."/>
            <person name="Shimokawa K."/>
            <person name="Bajic V.B."/>
            <person name="Brenner S.E."/>
            <person name="Batalov S."/>
            <person name="Forrest A.R."/>
            <person name="Zavolan M."/>
            <person name="Davis M.J."/>
            <person name="Wilming L.G."/>
            <person name="Aidinis V."/>
            <person name="Allen J.E."/>
            <person name="Ambesi-Impiombato A."/>
            <person name="Apweiler R."/>
            <person name="Aturaliya R.N."/>
            <person name="Bailey T.L."/>
            <person name="Bansal M."/>
            <person name="Baxter L."/>
            <person name="Beisel K.W."/>
            <person name="Bersano T."/>
            <person name="Bono H."/>
            <person name="Chalk A.M."/>
            <person name="Chiu K.P."/>
            <person name="Choudhary V."/>
            <person name="Christoffels A."/>
            <person name="Clutterbuck D.R."/>
            <person name="Crowe M.L."/>
            <person name="Dalla E."/>
            <person name="Dalrymple B.P."/>
            <person name="de Bono B."/>
            <person name="Della Gatta G."/>
            <person name="di Bernardo D."/>
            <person name="Down T."/>
            <person name="Engstrom P."/>
            <person name="Fagiolini M."/>
            <person name="Faulkner G."/>
            <person name="Fletcher C.F."/>
            <person name="Fukushima T."/>
            <person name="Furuno M."/>
            <person name="Futaki S."/>
            <person name="Gariboldi M."/>
            <person name="Georgii-Hemming P."/>
            <person name="Gingeras T.R."/>
            <person name="Gojobori T."/>
            <person name="Green R.E."/>
            <person name="Gustincich S."/>
            <person name="Harbers M."/>
            <person name="Hayashi Y."/>
            <person name="Hensch T.K."/>
            <person name="Hirokawa N."/>
            <person name="Hill D."/>
            <person name="Huminiecki L."/>
            <person name="Iacono M."/>
            <person name="Ikeo K."/>
            <person name="Iwama A."/>
            <person name="Ishikawa T."/>
            <person name="Jakt M."/>
            <person name="Kanapin A."/>
            <person name="Katoh M."/>
            <person name="Kawasawa Y."/>
            <person name="Kelso J."/>
            <person name="Kitamura H."/>
            <person name="Kitano H."/>
            <person name="Kollias G."/>
            <person name="Krishnan S.P."/>
            <person name="Kruger A."/>
            <person name="Kummerfeld S.K."/>
            <person name="Kurochkin I.V."/>
            <person name="Lareau L.F."/>
            <person name="Lazarevic D."/>
            <person name="Lipovich L."/>
            <person name="Liu J."/>
            <person name="Liuni S."/>
            <person name="McWilliam S."/>
            <person name="Madan Babu M."/>
            <person name="Madera M."/>
            <person name="Marchionni L."/>
            <person name="Matsuda H."/>
            <person name="Matsuzawa S."/>
            <person name="Miki H."/>
            <person name="Mignone F."/>
            <person name="Miyake S."/>
            <person name="Morris K."/>
            <person name="Mottagui-Tabar S."/>
            <person name="Mulder N."/>
            <person name="Nakano N."/>
            <person name="Nakauchi H."/>
            <person name="Ng P."/>
            <person name="Nilsson R."/>
            <person name="Nishiguchi S."/>
            <person name="Nishikawa S."/>
            <person name="Nori F."/>
            <person name="Ohara O."/>
            <person name="Okazaki Y."/>
            <person name="Orlando V."/>
            <person name="Pang K.C."/>
            <person name="Pavan W.J."/>
            <person name="Pavesi G."/>
            <person name="Pesole G."/>
            <person name="Petrovsky N."/>
            <person name="Piazza S."/>
            <person name="Reed J."/>
            <person name="Reid J.F."/>
            <person name="Ring B.Z."/>
            <person name="Ringwald M."/>
            <person name="Rost B."/>
            <person name="Ruan Y."/>
            <person name="Salzberg S.L."/>
            <person name="Sandelin A."/>
            <person name="Schneider C."/>
            <person name="Schoenbach C."/>
            <person name="Sekiguchi K."/>
            <person name="Semple C.A."/>
            <person name="Seno S."/>
            <person name="Sessa L."/>
            <person name="Sheng Y."/>
            <person name="Shibata Y."/>
            <person name="Shimada H."/>
            <person name="Shimada K."/>
            <person name="Silva D."/>
            <person name="Sinclair B."/>
            <person name="Sperling S."/>
            <person name="Stupka E."/>
            <person name="Sugiura K."/>
            <person name="Sultana R."/>
            <person name="Takenaka Y."/>
            <person name="Taki K."/>
            <person name="Tammoja K."/>
            <person name="Tan S.L."/>
            <person name="Tang S."/>
            <person name="Taylor M.S."/>
            <person name="Tegner J."/>
            <person name="Teichmann S.A."/>
            <person name="Ueda H.R."/>
            <person name="van Nimwegen E."/>
            <person name="Verardo R."/>
            <person name="Wei C.L."/>
            <person name="Yagi K."/>
            <person name="Yamanishi H."/>
            <person name="Zabarovsky E."/>
            <person name="Zhu S."/>
            <person name="Zimmer A."/>
            <person name="Hide W."/>
            <person name="Bult C."/>
            <person name="Grimmond S.M."/>
            <person name="Teasdale R.D."/>
            <person name="Liu E.T."/>
            <person name="Brusic V."/>
            <person name="Quackenbush J."/>
            <person name="Wahlestedt C."/>
            <person name="Mattick J.S."/>
            <person name="Hume D.A."/>
            <person name="Kai C."/>
            <person name="Sasaki D."/>
            <person name="Tomaru Y."/>
            <person name="Fukuda S."/>
            <person name="Kanamori-Katayama M."/>
            <person name="Suzuki M."/>
            <person name="Aoki J."/>
            <person name="Arakawa T."/>
            <person name="Iida J."/>
            <person name="Imamura K."/>
            <person name="Itoh M."/>
            <person name="Kato T."/>
            <person name="Kawaji H."/>
            <person name="Kawagashira N."/>
            <person name="Kawashima T."/>
            <person name="Kojima M."/>
            <person name="Kondo S."/>
            <person name="Konno H."/>
            <person name="Nakano K."/>
            <person name="Ninomiya N."/>
            <person name="Nishio T."/>
            <person name="Okada M."/>
            <person name="Plessy C."/>
            <person name="Shibata K."/>
            <person name="Shiraki T."/>
            <person name="Suzuki S."/>
            <person name="Tagami M."/>
            <person name="Waki K."/>
            <person name="Watahiki A."/>
            <person name="Okamura-Oho Y."/>
            <person name="Suzuki H."/>
            <person name="Kawai J."/>
            <person name="Hayashizaki Y."/>
        </authorList>
    </citation>
    <scope>NUCLEOTIDE SEQUENCE [LARGE SCALE MRNA]</scope>
    <source>
        <strain>NOD</strain>
        <tissue>Embryo</tissue>
    </source>
</reference>
<reference key="2">
    <citation type="submission" date="2005-07" db="EMBL/GenBank/DDBJ databases">
        <authorList>
            <person name="Mural R.J."/>
            <person name="Adams M.D."/>
            <person name="Myers E.W."/>
            <person name="Smith H.O."/>
            <person name="Venter J.C."/>
        </authorList>
    </citation>
    <scope>NUCLEOTIDE SEQUENCE [LARGE SCALE GENOMIC DNA]</scope>
</reference>
<reference key="3">
    <citation type="journal article" date="2008" name="Nature">
        <title>Essential roles of PI(3)K-p110beta in cell growth, metabolism and tumorigenesis.</title>
        <authorList>
            <person name="Jia S."/>
            <person name="Liu Z."/>
            <person name="Zhang S."/>
            <person name="Liu P."/>
            <person name="Zhang L."/>
            <person name="Lee S.H."/>
            <person name="Zhang J."/>
            <person name="Signoretti S."/>
            <person name="Loda M."/>
            <person name="Roberts T.M."/>
            <person name="Zhao J.J."/>
        </authorList>
    </citation>
    <scope>FUNCTION</scope>
    <scope>DISRUPTION PHENOTYPE</scope>
</reference>
<reference key="4">
    <citation type="journal article" date="2008" name="Proc. Natl. Acad. Sci. U.S.A.">
        <title>The p110beta isoform of phosphoinositide 3-kinase signals downstream of G protein-coupled receptors and is functionally redundant with p110gamma.</title>
        <authorList>
            <person name="Guillermet-Guibert J."/>
            <person name="Bjorklof K."/>
            <person name="Salpekar A."/>
            <person name="Gonella C."/>
            <person name="Ramadani F."/>
            <person name="Bilancio A."/>
            <person name="Meek S."/>
            <person name="Smith A.J.H."/>
            <person name="Okkenhaug K."/>
            <person name="Vanhaesebroeck B."/>
        </authorList>
    </citation>
    <scope>FUNCTION</scope>
</reference>
<reference key="5">
    <citation type="journal article" date="2009" name="Blood">
        <title>Genetic evidence for a predominant role of PI3Kbeta catalytic activity in ITAM- and integrin-mediated signaling in platelets.</title>
        <authorList>
            <person name="Canobbio I."/>
            <person name="Stefanini L."/>
            <person name="Cipolla L."/>
            <person name="Ciraolo E."/>
            <person name="Gruppi C."/>
            <person name="Balduini C."/>
            <person name="Hirsch E."/>
            <person name="Torti M."/>
        </authorList>
    </citation>
    <scope>FUNCTION</scope>
    <scope>DISRUPTION PHENOTYPE</scope>
</reference>
<reference key="6">
    <citation type="journal article" date="2010" name="Blood">
        <title>Deletion of the p110beta isoform of phosphoinositide 3-kinase in platelets reveals its central role in Akt activation and thrombus formation in vitro and in vivo.</title>
        <authorList>
            <person name="Martin V."/>
            <person name="Guillermet-Guibert J."/>
            <person name="Chicanne G."/>
            <person name="Cabou C."/>
            <person name="Jandrot-Perrus M."/>
            <person name="Plantavid M."/>
            <person name="Vanhaesebroeck B."/>
            <person name="Payrastre B."/>
            <person name="Gratacap M.-P."/>
        </authorList>
    </citation>
    <scope>FUNCTION</scope>
    <scope>DISRUPTION PHENOTYPE</scope>
</reference>
<reference key="7">
    <citation type="journal article" date="2010" name="Cell">
        <title>A tissue-specific atlas of mouse protein phosphorylation and expression.</title>
        <authorList>
            <person name="Huttlin E.L."/>
            <person name="Jedrychowski M.P."/>
            <person name="Elias J.E."/>
            <person name="Goswami T."/>
            <person name="Rad R."/>
            <person name="Beausoleil S.A."/>
            <person name="Villen J."/>
            <person name="Haas W."/>
            <person name="Sowa M.E."/>
            <person name="Gygi S.P."/>
        </authorList>
    </citation>
    <scope>PHOSPHORYLATION [LARGE SCALE ANALYSIS] AT SER-318</scope>
    <scope>IDENTIFICATION BY MASS SPECTROMETRY [LARGE SCALE ANALYSIS]</scope>
    <source>
        <tissue>Brain</tissue>
        <tissue>Brown adipose tissue</tissue>
        <tissue>Heart</tissue>
        <tissue>Kidney</tissue>
        <tissue>Liver</tissue>
        <tissue>Lung</tissue>
        <tissue>Spleen</tissue>
    </source>
</reference>
<reference key="8">
    <citation type="journal article" date="2010" name="J. Biol. Chem.">
        <title>Phosphoinositide 3-kinase p110 beta regulates integrin alpha IIb beta 3 avidity and the cellular transmission of contractile forces.</title>
        <authorList>
            <person name="Schoenwaelder S.M."/>
            <person name="Ono A."/>
            <person name="Nesbitt W.S."/>
            <person name="Lim J."/>
            <person name="Jarman K."/>
            <person name="Jackson S.P."/>
        </authorList>
    </citation>
    <scope>FUNCTION</scope>
</reference>
<reference key="9">
    <citation type="journal article" date="2010" name="J. Cell Biol.">
        <title>The class IA phosphatidylinositol 3-kinase p110-beta subunit is a positive regulator of autophagy.</title>
        <authorList>
            <person name="Dou Z."/>
            <person name="Chattopadhyay M."/>
            <person name="Pan J.-A."/>
            <person name="Guerriero J.L."/>
            <person name="Jiang Y.-P."/>
            <person name="Ballou L.M."/>
            <person name="Yue Z."/>
            <person name="Lin R.Z."/>
            <person name="Zong W.-X."/>
        </authorList>
    </citation>
    <scope>FUNCTION</scope>
    <scope>IDENTIFICATION IN A COMPLEX WITH PIK3C3 AND PIK3R4</scope>
    <scope>INTERACTION WITH BECN1; ATG14 AND RAB5A</scope>
    <scope>DISRUPTION PHENOTYPE</scope>
</reference>
<reference key="10">
    <citation type="journal article" date="2011" name="Mol. Cell">
        <title>Structure of lipid kinase p110beta/p85beta elucidates an unusual SH2-domain-mediated inhibitory mechanism.</title>
        <authorList>
            <person name="Zhang X."/>
            <person name="Vadas O."/>
            <person name="Perisic O."/>
            <person name="Anderson K.E."/>
            <person name="Clark J."/>
            <person name="Hawkins P.T."/>
            <person name="Stephens L.R."/>
            <person name="Williams R.L."/>
        </authorList>
    </citation>
    <scope>X-RAY CRYSTALLOGRAPHY (3.3 ANGSTROMS) IN A COMPLEX WITH PIK3R2 AND GDC-0941</scope>
    <scope>DOMAIN</scope>
</reference>